<sequence>MAHPAQLGFQDAASPVMEELLCFHDHALMIVFLISTLVLYIIIAMVSTKLTNKFILDSQEIEIVWTVLPAIILILIALPSLRILYLMDEINDPHVTIKAVGHQWYWSYEYTDYENLEFDSYMVPTQDLTPGGFRLLETDHRMVVPKESPIRILVSAEDVLHSWAVPSLGIKMDAVPGRLNQTAFIVSRPGVFYGQCSEICGANHSFMPIVVEAVPLEFFENWSSAMLEDA</sequence>
<dbReference type="EC" id="7.1.1.9"/>
<dbReference type="EMBL" id="AC024175">
    <property type="protein sequence ID" value="AAF74300.1"/>
    <property type="molecule type" value="Genomic_DNA"/>
</dbReference>
<dbReference type="RefSeq" id="NP_059334.1">
    <property type="nucleotide sequence ID" value="NC_002333.2"/>
</dbReference>
<dbReference type="SMR" id="Q9MIY7"/>
<dbReference type="FunCoup" id="Q9MIY7">
    <property type="interactions" value="10"/>
</dbReference>
<dbReference type="STRING" id="7955.ENSDARP00000087872"/>
<dbReference type="PaxDb" id="7955-ENSDARP00000087872"/>
<dbReference type="Ensembl" id="ENSDART00000093609">
    <property type="protein sequence ID" value="ENSDARP00000087872"/>
    <property type="gene ID" value="ENSDARG00000063908"/>
</dbReference>
<dbReference type="GeneID" id="140540"/>
<dbReference type="KEGG" id="dre:140540"/>
<dbReference type="AGR" id="ZFIN:ZDB-GENE-011205-15"/>
<dbReference type="CTD" id="4513"/>
<dbReference type="eggNOG" id="KOG4767">
    <property type="taxonomic scope" value="Eukaryota"/>
</dbReference>
<dbReference type="HOGENOM" id="CLU_036876_2_3_1"/>
<dbReference type="InParanoid" id="Q9MIY7"/>
<dbReference type="OMA" id="WSYEYTD"/>
<dbReference type="OrthoDB" id="539285at2759"/>
<dbReference type="PhylomeDB" id="Q9MIY7"/>
<dbReference type="TreeFam" id="TF344269"/>
<dbReference type="Reactome" id="R-DRE-5628897">
    <property type="pathway name" value="TP53 Regulates Metabolic Genes"/>
</dbReference>
<dbReference type="Reactome" id="R-DRE-611105">
    <property type="pathway name" value="Respiratory electron transport"/>
</dbReference>
<dbReference type="Reactome" id="R-DRE-9707564">
    <property type="pathway name" value="Cytoprotection by HMOX1"/>
</dbReference>
<dbReference type="Reactome" id="R-DRE-9864848">
    <property type="pathway name" value="Complex IV assembly"/>
</dbReference>
<dbReference type="PRO" id="PR:Q9MIY7"/>
<dbReference type="Proteomes" id="UP000000437">
    <property type="component" value="Mitochondrion MT"/>
</dbReference>
<dbReference type="Bgee" id="ENSDARG00000063908">
    <property type="expression patterns" value="Expressed in pharyngeal gill and 22 other cell types or tissues"/>
</dbReference>
<dbReference type="ExpressionAtlas" id="Q9MIY7">
    <property type="expression patterns" value="baseline"/>
</dbReference>
<dbReference type="GO" id="GO:0005743">
    <property type="term" value="C:mitochondrial inner membrane"/>
    <property type="evidence" value="ECO:0007669"/>
    <property type="project" value="UniProtKB-SubCell"/>
</dbReference>
<dbReference type="GO" id="GO:0045277">
    <property type="term" value="C:respiratory chain complex IV"/>
    <property type="evidence" value="ECO:0000250"/>
    <property type="project" value="UniProtKB"/>
</dbReference>
<dbReference type="GO" id="GO:0005507">
    <property type="term" value="F:copper ion binding"/>
    <property type="evidence" value="ECO:0007669"/>
    <property type="project" value="InterPro"/>
</dbReference>
<dbReference type="GO" id="GO:0004129">
    <property type="term" value="F:cytochrome-c oxidase activity"/>
    <property type="evidence" value="ECO:0007669"/>
    <property type="project" value="UniProtKB-EC"/>
</dbReference>
<dbReference type="GO" id="GO:0042773">
    <property type="term" value="P:ATP synthesis coupled electron transport"/>
    <property type="evidence" value="ECO:0000318"/>
    <property type="project" value="GO_Central"/>
</dbReference>
<dbReference type="CDD" id="cd13912">
    <property type="entry name" value="CcO_II_C"/>
    <property type="match status" value="1"/>
</dbReference>
<dbReference type="FunFam" id="1.10.287.90:FF:000001">
    <property type="entry name" value="Cytochrome c oxidase subunit 2"/>
    <property type="match status" value="1"/>
</dbReference>
<dbReference type="FunFam" id="2.60.40.420:FF:000001">
    <property type="entry name" value="Cytochrome c oxidase subunit 2"/>
    <property type="match status" value="1"/>
</dbReference>
<dbReference type="Gene3D" id="1.10.287.90">
    <property type="match status" value="1"/>
</dbReference>
<dbReference type="Gene3D" id="2.60.40.420">
    <property type="entry name" value="Cupredoxins - blue copper proteins"/>
    <property type="match status" value="1"/>
</dbReference>
<dbReference type="InterPro" id="IPR045187">
    <property type="entry name" value="CcO_II"/>
</dbReference>
<dbReference type="InterPro" id="IPR002429">
    <property type="entry name" value="CcO_II-like_C"/>
</dbReference>
<dbReference type="InterPro" id="IPR034210">
    <property type="entry name" value="CcO_II_C"/>
</dbReference>
<dbReference type="InterPro" id="IPR001505">
    <property type="entry name" value="Copper_CuA"/>
</dbReference>
<dbReference type="InterPro" id="IPR008972">
    <property type="entry name" value="Cupredoxin"/>
</dbReference>
<dbReference type="InterPro" id="IPR014222">
    <property type="entry name" value="Cyt_c_oxidase_su2"/>
</dbReference>
<dbReference type="InterPro" id="IPR011759">
    <property type="entry name" value="Cyt_c_oxidase_su2_TM_dom"/>
</dbReference>
<dbReference type="InterPro" id="IPR036257">
    <property type="entry name" value="Cyt_c_oxidase_su2_TM_sf"/>
</dbReference>
<dbReference type="NCBIfam" id="TIGR02866">
    <property type="entry name" value="CoxB"/>
    <property type="match status" value="1"/>
</dbReference>
<dbReference type="PANTHER" id="PTHR22888:SF9">
    <property type="entry name" value="CYTOCHROME C OXIDASE SUBUNIT 2"/>
    <property type="match status" value="1"/>
</dbReference>
<dbReference type="PANTHER" id="PTHR22888">
    <property type="entry name" value="CYTOCHROME C OXIDASE, SUBUNIT II"/>
    <property type="match status" value="1"/>
</dbReference>
<dbReference type="Pfam" id="PF00116">
    <property type="entry name" value="COX2"/>
    <property type="match status" value="1"/>
</dbReference>
<dbReference type="Pfam" id="PF02790">
    <property type="entry name" value="COX2_TM"/>
    <property type="match status" value="1"/>
</dbReference>
<dbReference type="PRINTS" id="PR01166">
    <property type="entry name" value="CYCOXIDASEII"/>
</dbReference>
<dbReference type="SUPFAM" id="SSF49503">
    <property type="entry name" value="Cupredoxins"/>
    <property type="match status" value="1"/>
</dbReference>
<dbReference type="SUPFAM" id="SSF81464">
    <property type="entry name" value="Cytochrome c oxidase subunit II-like, transmembrane region"/>
    <property type="match status" value="1"/>
</dbReference>
<dbReference type="PROSITE" id="PS00078">
    <property type="entry name" value="COX2"/>
    <property type="match status" value="1"/>
</dbReference>
<dbReference type="PROSITE" id="PS50857">
    <property type="entry name" value="COX2_CUA"/>
    <property type="match status" value="1"/>
</dbReference>
<dbReference type="PROSITE" id="PS50999">
    <property type="entry name" value="COX2_TM"/>
    <property type="match status" value="1"/>
</dbReference>
<keyword id="KW-0186">Copper</keyword>
<keyword id="KW-0249">Electron transport</keyword>
<keyword id="KW-0460">Magnesium</keyword>
<keyword id="KW-0472">Membrane</keyword>
<keyword id="KW-0479">Metal-binding</keyword>
<keyword id="KW-0496">Mitochondrion</keyword>
<keyword id="KW-0999">Mitochondrion inner membrane</keyword>
<keyword id="KW-1185">Reference proteome</keyword>
<keyword id="KW-0679">Respiratory chain</keyword>
<keyword id="KW-1278">Translocase</keyword>
<keyword id="KW-0812">Transmembrane</keyword>
<keyword id="KW-1133">Transmembrane helix</keyword>
<keyword id="KW-0813">Transport</keyword>
<accession>Q9MIY7</accession>
<gene>
    <name type="primary">mt-co2</name>
    <name type="synonym">coii</name>
    <name type="synonym">cox2</name>
    <name type="synonym">coxii</name>
    <name type="synonym">mtco2</name>
</gene>
<reference key="1">
    <citation type="journal article" date="2001" name="Genome Res.">
        <title>The complete sequence of the zebrafish (Danio rerio) mitochondrial genome and evolutionary patterns in vertebrate mitochondrial DNA.</title>
        <authorList>
            <person name="Broughton R.E."/>
            <person name="Milam J.E."/>
            <person name="Roe B.A."/>
        </authorList>
    </citation>
    <scope>NUCLEOTIDE SEQUENCE [LARGE SCALE GENOMIC DNA]</scope>
    <source>
        <strain evidence="5">Tuebingen</strain>
    </source>
</reference>
<proteinExistence type="inferred from homology"/>
<evidence type="ECO:0000250" key="1">
    <source>
        <dbReference type="UniProtKB" id="P00403"/>
    </source>
</evidence>
<evidence type="ECO:0000250" key="2">
    <source>
        <dbReference type="UniProtKB" id="P00410"/>
    </source>
</evidence>
<evidence type="ECO:0000250" key="3">
    <source>
        <dbReference type="UniProtKB" id="P68530"/>
    </source>
</evidence>
<evidence type="ECO:0000305" key="4"/>
<evidence type="ECO:0000312" key="5">
    <source>
        <dbReference type="Proteomes" id="UP000000437"/>
    </source>
</evidence>
<comment type="function">
    <text evidence="2">Component of the cytochrome c oxidase, the last enzyme in the mitochondrial electron transport chain which drives oxidative phosphorylation. The respiratory chain contains 3 multisubunit complexes succinate dehydrogenase (complex II, CII), ubiquinol-cytochrome c oxidoreductase (cytochrome b-c1 complex, complex III, CIII) and cytochrome c oxidase (complex IV, CIV), that cooperate to transfer electrons derived from NADH and succinate to molecular oxygen, creating an electrochemical gradient over the inner membrane that drives transmembrane transport and the ATP synthase. Cytochrome c oxidase is the component of the respiratory chain that catalyzes the reduction of oxygen to water. Electrons originating from reduced cytochrome c in the intermembrane space (IMS) are transferred via the dinuclear copper A center (CU(A)) of subunit 2 and heme A of subunit 1 to the active site in subunit 1, a binuclear center (BNC) formed by heme A3 and copper B (CU(B)). The BNC reduces molecular oxygen to 2 water molecules using 4 electrons from cytochrome c in the IMS and 4 protons from the mitochondrial matrix.</text>
</comment>
<comment type="catalytic activity">
    <reaction evidence="2">
        <text>4 Fe(II)-[cytochrome c] + O2 + 8 H(+)(in) = 4 Fe(III)-[cytochrome c] + 2 H2O + 4 H(+)(out)</text>
        <dbReference type="Rhea" id="RHEA:11436"/>
        <dbReference type="Rhea" id="RHEA-COMP:10350"/>
        <dbReference type="Rhea" id="RHEA-COMP:14399"/>
        <dbReference type="ChEBI" id="CHEBI:15377"/>
        <dbReference type="ChEBI" id="CHEBI:15378"/>
        <dbReference type="ChEBI" id="CHEBI:15379"/>
        <dbReference type="ChEBI" id="CHEBI:29033"/>
        <dbReference type="ChEBI" id="CHEBI:29034"/>
        <dbReference type="EC" id="7.1.1.9"/>
    </reaction>
    <physiologicalReaction direction="left-to-right" evidence="2">
        <dbReference type="Rhea" id="RHEA:11437"/>
    </physiologicalReaction>
</comment>
<comment type="cofactor">
    <cofactor evidence="3">
        <name>Cu cation</name>
        <dbReference type="ChEBI" id="CHEBI:23378"/>
    </cofactor>
    <text evidence="3">Binds a dinuclear copper A center per subunit.</text>
</comment>
<comment type="subunit">
    <text evidence="1 3">Component of the cytochrome c oxidase (complex IV, CIV), a multisubunit enzyme composed of 14 subunits. The complex is composed of a catalytic core of 3 subunits MT-CO1, MT-CO2 and MT-CO3, encoded in the mitochondrial DNA, and 11 supernumerary subunits COX4I, COX5A, COX5B, COX6A, COX6B, COX6C, COX7A, COX7B, COX7C, COX8 and NDUFA4, which are encoded in the nuclear genome. The complex exists as a monomer or a dimer and forms supercomplexes (SCs) in the inner mitochondrial membrane with NADH-ubiquinone oxidoreductase (complex I, CI) and ubiquinol-cytochrome c oxidoreductase (cytochrome b-c1 complex, complex III, CIII), resulting in different assemblies (supercomplex SCI(1)III(2)IV(1) and megacomplex MCI(2)III(2)IV(2)) (By similarity). Found in a complex with TMEM177, COA6, COX18, COX20, SCO1 and SCO2. Interacts with TMEM177 in a COX20-dependent manner. Interacts with COX20. Interacts with COX16 (By similarity).</text>
</comment>
<comment type="subcellular location">
    <subcellularLocation>
        <location evidence="3">Mitochondrion inner membrane</location>
        <topology evidence="3">Multi-pass membrane protein</topology>
    </subcellularLocation>
</comment>
<comment type="similarity">
    <text evidence="4">Belongs to the cytochrome c oxidase subunit 2 family.</text>
</comment>
<protein>
    <recommendedName>
        <fullName>Cytochrome c oxidase subunit 2</fullName>
        <ecNumber>7.1.1.9</ecNumber>
    </recommendedName>
    <alternativeName>
        <fullName>Cytochrome c oxidase polypeptide II</fullName>
    </alternativeName>
</protein>
<geneLocation type="mitochondrion"/>
<name>COX2_DANRE</name>
<organism>
    <name type="scientific">Danio rerio</name>
    <name type="common">Zebrafish</name>
    <name type="synonym">Brachydanio rerio</name>
    <dbReference type="NCBI Taxonomy" id="7955"/>
    <lineage>
        <taxon>Eukaryota</taxon>
        <taxon>Metazoa</taxon>
        <taxon>Chordata</taxon>
        <taxon>Craniata</taxon>
        <taxon>Vertebrata</taxon>
        <taxon>Euteleostomi</taxon>
        <taxon>Actinopterygii</taxon>
        <taxon>Neopterygii</taxon>
        <taxon>Teleostei</taxon>
        <taxon>Ostariophysi</taxon>
        <taxon>Cypriniformes</taxon>
        <taxon>Danionidae</taxon>
        <taxon>Danioninae</taxon>
        <taxon>Danio</taxon>
    </lineage>
</organism>
<feature type="chain" id="PRO_0000183520" description="Cytochrome c oxidase subunit 2">
    <location>
        <begin position="1"/>
        <end position="230"/>
    </location>
</feature>
<feature type="topological domain" description="Mitochondrial intermembrane" evidence="3">
    <location>
        <begin position="1"/>
        <end position="14"/>
    </location>
</feature>
<feature type="transmembrane region" description="Helical; Name=I" evidence="3">
    <location>
        <begin position="15"/>
        <end position="45"/>
    </location>
</feature>
<feature type="topological domain" description="Mitochondrial matrix" evidence="3">
    <location>
        <begin position="46"/>
        <end position="59"/>
    </location>
</feature>
<feature type="transmembrane region" description="Helical; Name=II" evidence="3">
    <location>
        <begin position="60"/>
        <end position="87"/>
    </location>
</feature>
<feature type="topological domain" description="Mitochondrial intermembrane" evidence="3">
    <location>
        <begin position="88"/>
        <end position="230"/>
    </location>
</feature>
<feature type="binding site" evidence="3">
    <location>
        <position position="161"/>
    </location>
    <ligand>
        <name>Cu cation</name>
        <dbReference type="ChEBI" id="CHEBI:23378"/>
        <label>A1</label>
    </ligand>
</feature>
<feature type="binding site" evidence="3">
    <location>
        <position position="196"/>
    </location>
    <ligand>
        <name>Cu cation</name>
        <dbReference type="ChEBI" id="CHEBI:23378"/>
        <label>A1</label>
    </ligand>
</feature>
<feature type="binding site" evidence="3">
    <location>
        <position position="196"/>
    </location>
    <ligand>
        <name>Cu cation</name>
        <dbReference type="ChEBI" id="CHEBI:23378"/>
        <label>A2</label>
    </ligand>
</feature>
<feature type="binding site" evidence="3">
    <location>
        <position position="198"/>
    </location>
    <ligand>
        <name>Cu cation</name>
        <dbReference type="ChEBI" id="CHEBI:23378"/>
        <label>A2</label>
    </ligand>
</feature>
<feature type="binding site" evidence="3">
    <location>
        <position position="198"/>
    </location>
    <ligand>
        <name>Mg(2+)</name>
        <dbReference type="ChEBI" id="CHEBI:18420"/>
        <note>ligand shared with MT-CO1</note>
    </ligand>
</feature>
<feature type="binding site" evidence="3">
    <location>
        <position position="200"/>
    </location>
    <ligand>
        <name>Cu cation</name>
        <dbReference type="ChEBI" id="CHEBI:23378"/>
        <label>A1</label>
    </ligand>
</feature>
<feature type="binding site" evidence="3">
    <location>
        <position position="200"/>
    </location>
    <ligand>
        <name>Cu cation</name>
        <dbReference type="ChEBI" id="CHEBI:23378"/>
        <label>A2</label>
    </ligand>
</feature>
<feature type="binding site" evidence="3">
    <location>
        <position position="204"/>
    </location>
    <ligand>
        <name>Cu cation</name>
        <dbReference type="ChEBI" id="CHEBI:23378"/>
        <label>A2</label>
    </ligand>
</feature>
<feature type="binding site" evidence="3">
    <location>
        <position position="207"/>
    </location>
    <ligand>
        <name>Cu cation</name>
        <dbReference type="ChEBI" id="CHEBI:23378"/>
        <label>A1</label>
    </ligand>
</feature>